<sequence>MQIFVKTLTGKTITLEVESSDTIDNVKAKIQDKEGIPPDQQRLIFAGKQLEDGRTLADYNIQKESTLHLVLRLRGGMQIFVKTLTGKTITLEVESSDTIDNVKAKIQDKEGIPPDQQRLIFAGKQLEDGRTLADYNIQKESTLHLVLRLRGGMQIFVKTLTGKTITLEVESSDTIDNVKAKIQDKEGIPPDQQRLIFAGKQLEDGRTLADYNIQKESTLHLVLRLRGGMQIFVKTLTGKTITLEVESSDTIDNVKAKIQDKEGIPPDQQRLIFAGKQLEDGRTLADYNIQKESTLHLVLRLRGGMQIFVKTLTGKTITLEVESSDTIDNVKAKIQDKEGIPPDQQRLIFAGKQLEDGRTLADYNIQKESTLHLVLRLRGGMQIFVKTLTGKTITLEVESSDTIDNVKAKIQDKEGIPPDQQRLIFAGKQLEDGRTLADYNIQKESTLHLVLRLRGGF</sequence>
<proteinExistence type="evidence at transcript level"/>
<comment type="function">
    <text evidence="1">Ubiquitin exists either covalently attached to another protein, or free (unanchored). When covalently bound, it is conjugated to target proteins via an isopeptide bond either as a monomer (monoubiquitin), a polymer linked via different Lys residues of the ubiquitin (polyubiquitin chains) or a linear polymer linked via the initiator Met of the ubiquitin (linear polyubiquitin chains). Polyubiquitin chains, when attached to a target protein, have different functions depending on the Lys residue of the ubiquitin that is linked: Lys-11-linked is involved in ERAD (endoplasmic reticulum-associated degradation) and in cell-cycle regulation; Lys-29-linked is involved in lysosomal degradation; Lys-33-linked is involved in kinase modification; Lys-48-linked is involved in protein degradation via the proteasome; Lys-63-linked is involved in endocytosis, and DNA-damage responses. Linear polymer chains formed via attachment by the initiator Met lead to cell signaling. Ubiquitin is usually conjugated to Lys residues of target proteins, however, in rare cases, conjugation to Cys or Ser residues has been observed. When polyubiquitin is free (unanchored-polyubiquitin), it also has distinct roles, such as in activation of protein kinases, and in signaling (By similarity).</text>
</comment>
<comment type="subcellular location">
    <subcellularLocation>
        <location evidence="1">Cytoplasm</location>
    </subcellularLocation>
    <subcellularLocation>
        <location evidence="1">Nucleus</location>
    </subcellularLocation>
</comment>
<comment type="alternative products">
    <event type="alternative splicing"/>
    <isoform>
        <id>Q8H159-1</id>
        <name>1</name>
        <sequence type="displayed"/>
    </isoform>
    <isoform>
        <id>Q8H159-2</id>
        <name>2</name>
        <sequence type="described" ref="VSP_041600"/>
    </isoform>
</comment>
<comment type="miscellaneous">
    <text>Ubiquitin is encoded by 16 different genes. Ubiquitin is generally synthesized as a polyubiquitin precursor with tandem head to tail repeats. Often, there is one to three additional amino acids after the last repeat, removed in the mature protein. Alternatively, ubiquitin extension protein is synthesized as a single copy of ubiquitin fused to a ribosomal protein (either eL40 or eS31) or to a ubiquitin-related protein (either RUB1 or RUB2). Following translation, extension protein is cleaved from ubiquitin.</text>
</comment>
<comment type="miscellaneous">
    <text>For the sake of clarity sequence features are annotated only for the first chain, and are not repeated for each of the following chains.</text>
</comment>
<comment type="similarity">
    <text evidence="3">Belongs to the ubiquitin family.</text>
</comment>
<comment type="sequence caution" evidence="3">
    <conflict type="frameshift">
        <sequence resource="EMBL-CDS" id="AAN31845"/>
    </conflict>
</comment>
<comment type="sequence caution" evidence="3">
    <conflict type="erroneous gene model prediction">
        <sequence resource="EMBL-CDS" id="CAB81074"/>
    </conflict>
</comment>
<name>UBQ10_ARATH</name>
<feature type="chain" id="PRO_0000396888" description="Ubiquitin">
    <location>
        <begin position="1"/>
        <end position="76"/>
    </location>
</feature>
<feature type="chain" id="PRO_0000396889" description="Ubiquitin">
    <location>
        <begin position="77"/>
        <end position="152"/>
    </location>
</feature>
<feature type="chain" id="PRO_0000396890" description="Ubiquitin">
    <location>
        <begin position="153"/>
        <end position="228"/>
    </location>
</feature>
<feature type="chain" id="PRO_0000396891" description="Ubiquitin">
    <location>
        <begin position="229"/>
        <end position="304"/>
    </location>
</feature>
<feature type="chain" id="PRO_0000396892" description="Ubiquitin">
    <location>
        <begin position="305"/>
        <end position="380"/>
    </location>
</feature>
<feature type="chain" id="PRO_0000396893" description="Ubiquitin">
    <location>
        <begin position="381"/>
        <end position="456"/>
    </location>
</feature>
<feature type="propeptide" id="PRO_0000396894" evidence="3">
    <location>
        <position position="457"/>
    </location>
</feature>
<feature type="domain" description="Ubiquitin-like 1" evidence="2">
    <location>
        <begin position="1"/>
        <end position="76"/>
    </location>
</feature>
<feature type="domain" description="Ubiquitin-like 2" evidence="2">
    <location>
        <begin position="77"/>
        <end position="152"/>
    </location>
</feature>
<feature type="domain" description="Ubiquitin-like 3" evidence="2">
    <location>
        <begin position="153"/>
        <end position="228"/>
    </location>
</feature>
<feature type="domain" description="Ubiquitin-like 4" evidence="2">
    <location>
        <begin position="229"/>
        <end position="304"/>
    </location>
</feature>
<feature type="domain" description="Ubiquitin-like 5" evidence="2">
    <location>
        <begin position="305"/>
        <end position="380"/>
    </location>
</feature>
<feature type="domain" description="Ubiquitin-like 6" evidence="2">
    <location>
        <begin position="381"/>
        <end position="456"/>
    </location>
</feature>
<feature type="cross-link" description="Glycyl lysine isopeptide (Gly-Lys) (interchain with K-? in acceptor proteins)" evidence="2">
    <location>
        <position position="76"/>
    </location>
</feature>
<feature type="splice variant" id="VSP_041600" description="In isoform 2." evidence="3">
    <location>
        <begin position="1"/>
        <end position="152"/>
    </location>
</feature>
<accession>Q8H159</accession>
<accession>O80715</accession>
<accession>P59263</accession>
<accession>Q38875</accession>
<accession>Q9LDJ2</accession>
<accession>Q9LYW1</accession>
<accession>Q9M0W3</accession>
<accession>Q9M1P9</accession>
<accession>Q9S7X3</accession>
<organism>
    <name type="scientific">Arabidopsis thaliana</name>
    <name type="common">Mouse-ear cress</name>
    <dbReference type="NCBI Taxonomy" id="3702"/>
    <lineage>
        <taxon>Eukaryota</taxon>
        <taxon>Viridiplantae</taxon>
        <taxon>Streptophyta</taxon>
        <taxon>Embryophyta</taxon>
        <taxon>Tracheophyta</taxon>
        <taxon>Spermatophyta</taxon>
        <taxon>Magnoliopsida</taxon>
        <taxon>eudicotyledons</taxon>
        <taxon>Gunneridae</taxon>
        <taxon>Pentapetalae</taxon>
        <taxon>rosids</taxon>
        <taxon>malvids</taxon>
        <taxon>Brassicales</taxon>
        <taxon>Brassicaceae</taxon>
        <taxon>Camelineae</taxon>
        <taxon>Arabidopsis</taxon>
    </lineage>
</organism>
<reference key="1">
    <citation type="journal article" date="1995" name="Genetics">
        <title>Structure and evolution of genes encoding polyubiquitin and ubiquitin-like proteins in Arabidopsis thaliana ecotype Columbia.</title>
        <authorList>
            <person name="Callis J."/>
            <person name="Carpenter T."/>
            <person name="Sun C.W."/>
            <person name="Vierstra R.D."/>
        </authorList>
    </citation>
    <scope>NUCLEOTIDE SEQUENCE [MRNA]</scope>
    <source>
        <strain>cv. Columbia</strain>
    </source>
</reference>
<reference key="2">
    <citation type="journal article" date="1999" name="Nature">
        <title>Sequence and analysis of chromosome 4 of the plant Arabidopsis thaliana.</title>
        <authorList>
            <person name="Mayer K.F.X."/>
            <person name="Schueller C."/>
            <person name="Wambutt R."/>
            <person name="Murphy G."/>
            <person name="Volckaert G."/>
            <person name="Pohl T."/>
            <person name="Duesterhoeft A."/>
            <person name="Stiekema W."/>
            <person name="Entian K.-D."/>
            <person name="Terryn N."/>
            <person name="Harris B."/>
            <person name="Ansorge W."/>
            <person name="Brandt P."/>
            <person name="Grivell L.A."/>
            <person name="Rieger M."/>
            <person name="Weichselgartner M."/>
            <person name="de Simone V."/>
            <person name="Obermaier B."/>
            <person name="Mache R."/>
            <person name="Mueller M."/>
            <person name="Kreis M."/>
            <person name="Delseny M."/>
            <person name="Puigdomenech P."/>
            <person name="Watson M."/>
            <person name="Schmidtheini T."/>
            <person name="Reichert B."/>
            <person name="Portetelle D."/>
            <person name="Perez-Alonso M."/>
            <person name="Boutry M."/>
            <person name="Bancroft I."/>
            <person name="Vos P."/>
            <person name="Hoheisel J."/>
            <person name="Zimmermann W."/>
            <person name="Wedler H."/>
            <person name="Ridley P."/>
            <person name="Langham S.-A."/>
            <person name="McCullagh B."/>
            <person name="Bilham L."/>
            <person name="Robben J."/>
            <person name="van der Schueren J."/>
            <person name="Grymonprez B."/>
            <person name="Chuang Y.-J."/>
            <person name="Vandenbussche F."/>
            <person name="Braeken M."/>
            <person name="Weltjens I."/>
            <person name="Voet M."/>
            <person name="Bastiaens I."/>
            <person name="Aert R."/>
            <person name="Defoor E."/>
            <person name="Weitzenegger T."/>
            <person name="Bothe G."/>
            <person name="Ramsperger U."/>
            <person name="Hilbert H."/>
            <person name="Braun M."/>
            <person name="Holzer E."/>
            <person name="Brandt A."/>
            <person name="Peters S."/>
            <person name="van Staveren M."/>
            <person name="Dirkse W."/>
            <person name="Mooijman P."/>
            <person name="Klein Lankhorst R."/>
            <person name="Rose M."/>
            <person name="Hauf J."/>
            <person name="Koetter P."/>
            <person name="Berneiser S."/>
            <person name="Hempel S."/>
            <person name="Feldpausch M."/>
            <person name="Lamberth S."/>
            <person name="Van den Daele H."/>
            <person name="De Keyser A."/>
            <person name="Buysshaert C."/>
            <person name="Gielen J."/>
            <person name="Villarroel R."/>
            <person name="De Clercq R."/>
            <person name="van Montagu M."/>
            <person name="Rogers J."/>
            <person name="Cronin A."/>
            <person name="Quail M.A."/>
            <person name="Bray-Allen S."/>
            <person name="Clark L."/>
            <person name="Doggett J."/>
            <person name="Hall S."/>
            <person name="Kay M."/>
            <person name="Lennard N."/>
            <person name="McLay K."/>
            <person name="Mayes R."/>
            <person name="Pettett A."/>
            <person name="Rajandream M.A."/>
            <person name="Lyne M."/>
            <person name="Benes V."/>
            <person name="Rechmann S."/>
            <person name="Borkova D."/>
            <person name="Bloecker H."/>
            <person name="Scharfe M."/>
            <person name="Grimm M."/>
            <person name="Loehnert T.-H."/>
            <person name="Dose S."/>
            <person name="de Haan M."/>
            <person name="Maarse A.C."/>
            <person name="Schaefer M."/>
            <person name="Mueller-Auer S."/>
            <person name="Gabel C."/>
            <person name="Fuchs M."/>
            <person name="Fartmann B."/>
            <person name="Granderath K."/>
            <person name="Dauner D."/>
            <person name="Herzl A."/>
            <person name="Neumann S."/>
            <person name="Argiriou A."/>
            <person name="Vitale D."/>
            <person name="Liguori R."/>
            <person name="Piravandi E."/>
            <person name="Massenet O."/>
            <person name="Quigley F."/>
            <person name="Clabauld G."/>
            <person name="Muendlein A."/>
            <person name="Felber R."/>
            <person name="Schnabl S."/>
            <person name="Hiller R."/>
            <person name="Schmidt W."/>
            <person name="Lecharny A."/>
            <person name="Aubourg S."/>
            <person name="Chefdor F."/>
            <person name="Cooke R."/>
            <person name="Berger C."/>
            <person name="Monfort A."/>
            <person name="Casacuberta E."/>
            <person name="Gibbons T."/>
            <person name="Weber N."/>
            <person name="Vandenbol M."/>
            <person name="Bargues M."/>
            <person name="Terol J."/>
            <person name="Torres A."/>
            <person name="Perez-Perez A."/>
            <person name="Purnelle B."/>
            <person name="Bent E."/>
            <person name="Johnson S."/>
            <person name="Tacon D."/>
            <person name="Jesse T."/>
            <person name="Heijnen L."/>
            <person name="Schwarz S."/>
            <person name="Scholler P."/>
            <person name="Heber S."/>
            <person name="Francs P."/>
            <person name="Bielke C."/>
            <person name="Frishman D."/>
            <person name="Haase D."/>
            <person name="Lemcke K."/>
            <person name="Mewes H.-W."/>
            <person name="Stocker S."/>
            <person name="Zaccaria P."/>
            <person name="Bevan M."/>
            <person name="Wilson R.K."/>
            <person name="de la Bastide M."/>
            <person name="Habermann K."/>
            <person name="Parnell L."/>
            <person name="Dedhia N."/>
            <person name="Gnoj L."/>
            <person name="Schutz K."/>
            <person name="Huang E."/>
            <person name="Spiegel L."/>
            <person name="Sekhon M."/>
            <person name="Murray J."/>
            <person name="Sheet P."/>
            <person name="Cordes M."/>
            <person name="Abu-Threideh J."/>
            <person name="Stoneking T."/>
            <person name="Kalicki J."/>
            <person name="Graves T."/>
            <person name="Harmon G."/>
            <person name="Edwards J."/>
            <person name="Latreille P."/>
            <person name="Courtney L."/>
            <person name="Cloud J."/>
            <person name="Abbott A."/>
            <person name="Scott K."/>
            <person name="Johnson D."/>
            <person name="Minx P."/>
            <person name="Bentley D."/>
            <person name="Fulton B."/>
            <person name="Miller N."/>
            <person name="Greco T."/>
            <person name="Kemp K."/>
            <person name="Kramer J."/>
            <person name="Fulton L."/>
            <person name="Mardis E."/>
            <person name="Dante M."/>
            <person name="Pepin K."/>
            <person name="Hillier L.W."/>
            <person name="Nelson J."/>
            <person name="Spieth J."/>
            <person name="Ryan E."/>
            <person name="Andrews S."/>
            <person name="Geisel C."/>
            <person name="Layman D."/>
            <person name="Du H."/>
            <person name="Ali J."/>
            <person name="Berghoff A."/>
            <person name="Jones K."/>
            <person name="Drone K."/>
            <person name="Cotton M."/>
            <person name="Joshu C."/>
            <person name="Antonoiu B."/>
            <person name="Zidanic M."/>
            <person name="Strong C."/>
            <person name="Sun H."/>
            <person name="Lamar B."/>
            <person name="Yordan C."/>
            <person name="Ma P."/>
            <person name="Zhong J."/>
            <person name="Preston R."/>
            <person name="Vil D."/>
            <person name="Shekher M."/>
            <person name="Matero A."/>
            <person name="Shah R."/>
            <person name="Swaby I.K."/>
            <person name="O'Shaughnessy A."/>
            <person name="Rodriguez M."/>
            <person name="Hoffman J."/>
            <person name="Till S."/>
            <person name="Granat S."/>
            <person name="Shohdy N."/>
            <person name="Hasegawa A."/>
            <person name="Hameed A."/>
            <person name="Lodhi M."/>
            <person name="Johnson A."/>
            <person name="Chen E."/>
            <person name="Marra M.A."/>
            <person name="Martienssen R."/>
            <person name="McCombie W.R."/>
        </authorList>
    </citation>
    <scope>NUCLEOTIDE SEQUENCE [LARGE SCALE GENOMIC DNA]</scope>
    <source>
        <strain>cv. Columbia</strain>
    </source>
</reference>
<reference key="3">
    <citation type="journal article" date="2017" name="Plant J.">
        <title>Araport11: a complete reannotation of the Arabidopsis thaliana reference genome.</title>
        <authorList>
            <person name="Cheng C.Y."/>
            <person name="Krishnakumar V."/>
            <person name="Chan A.P."/>
            <person name="Thibaud-Nissen F."/>
            <person name="Schobel S."/>
            <person name="Town C.D."/>
        </authorList>
    </citation>
    <scope>GENOME REANNOTATION</scope>
    <source>
        <strain>cv. Columbia</strain>
    </source>
</reference>
<reference key="4">
    <citation type="journal article" date="2003" name="Science">
        <title>Empirical analysis of transcriptional activity in the Arabidopsis genome.</title>
        <authorList>
            <person name="Yamada K."/>
            <person name="Lim J."/>
            <person name="Dale J.M."/>
            <person name="Chen H."/>
            <person name="Shinn P."/>
            <person name="Palm C.J."/>
            <person name="Southwick A.M."/>
            <person name="Wu H.C."/>
            <person name="Kim C.J."/>
            <person name="Nguyen M."/>
            <person name="Pham P.K."/>
            <person name="Cheuk R.F."/>
            <person name="Karlin-Newmann G."/>
            <person name="Liu S.X."/>
            <person name="Lam B."/>
            <person name="Sakano H."/>
            <person name="Wu T."/>
            <person name="Yu G."/>
            <person name="Miranda M."/>
            <person name="Quach H.L."/>
            <person name="Tripp M."/>
            <person name="Chang C.H."/>
            <person name="Lee J.M."/>
            <person name="Toriumi M.J."/>
            <person name="Chan M.M."/>
            <person name="Tang C.C."/>
            <person name="Onodera C.S."/>
            <person name="Deng J.M."/>
            <person name="Akiyama K."/>
            <person name="Ansari Y."/>
            <person name="Arakawa T."/>
            <person name="Banh J."/>
            <person name="Banno F."/>
            <person name="Bowser L."/>
            <person name="Brooks S.Y."/>
            <person name="Carninci P."/>
            <person name="Chao Q."/>
            <person name="Choy N."/>
            <person name="Enju A."/>
            <person name="Goldsmith A.D."/>
            <person name="Gurjal M."/>
            <person name="Hansen N.F."/>
            <person name="Hayashizaki Y."/>
            <person name="Johnson-Hopson C."/>
            <person name="Hsuan V.W."/>
            <person name="Iida K."/>
            <person name="Karnes M."/>
            <person name="Khan S."/>
            <person name="Koesema E."/>
            <person name="Ishida J."/>
            <person name="Jiang P.X."/>
            <person name="Jones T."/>
            <person name="Kawai J."/>
            <person name="Kamiya A."/>
            <person name="Meyers C."/>
            <person name="Nakajima M."/>
            <person name="Narusaka M."/>
            <person name="Seki M."/>
            <person name="Sakurai T."/>
            <person name="Satou M."/>
            <person name="Tamse R."/>
            <person name="Vaysberg M."/>
            <person name="Wallender E.K."/>
            <person name="Wong C."/>
            <person name="Yamamura Y."/>
            <person name="Yuan S."/>
            <person name="Shinozaki K."/>
            <person name="Davis R.W."/>
            <person name="Theologis A."/>
            <person name="Ecker J.R."/>
        </authorList>
    </citation>
    <scope>NUCLEOTIDE SEQUENCE [LARGE SCALE MRNA]</scope>
    <source>
        <strain>cv. Columbia</strain>
    </source>
</reference>
<keyword id="KW-0025">Alternative splicing</keyword>
<keyword id="KW-0963">Cytoplasm</keyword>
<keyword id="KW-1017">Isopeptide bond</keyword>
<keyword id="KW-0539">Nucleus</keyword>
<keyword id="KW-1185">Reference proteome</keyword>
<keyword id="KW-0677">Repeat</keyword>
<keyword id="KW-0833">Ubl conjugation pathway</keyword>
<gene>
    <name type="primary">UBQ10</name>
    <name type="ordered locus">At4g05320</name>
    <name type="ORF">C17L7.240</name>
</gene>
<dbReference type="EMBL" id="L05361">
    <property type="protein sequence ID" value="AAA68878.1"/>
    <property type="molecule type" value="mRNA"/>
</dbReference>
<dbReference type="EMBL" id="AC012392">
    <property type="status" value="NOT_ANNOTATED_CDS"/>
    <property type="molecule type" value="Genomic_DNA"/>
</dbReference>
<dbReference type="EMBL" id="AL161503">
    <property type="protein sequence ID" value="CAB81074.1"/>
    <property type="status" value="ALT_SEQ"/>
    <property type="molecule type" value="Genomic_DNA"/>
</dbReference>
<dbReference type="EMBL" id="CP002687">
    <property type="protein sequence ID" value="AEE82500.1"/>
    <property type="molecule type" value="Genomic_DNA"/>
</dbReference>
<dbReference type="EMBL" id="CP002687">
    <property type="protein sequence ID" value="AEE82502.1"/>
    <property type="molecule type" value="Genomic_DNA"/>
</dbReference>
<dbReference type="EMBL" id="CP002687">
    <property type="protein sequence ID" value="AEE82503.1"/>
    <property type="molecule type" value="Genomic_DNA"/>
</dbReference>
<dbReference type="EMBL" id="CP002687">
    <property type="protein sequence ID" value="ANM67151.1"/>
    <property type="molecule type" value="Genomic_DNA"/>
</dbReference>
<dbReference type="EMBL" id="AY139999">
    <property type="protein sequence ID" value="AAM98141.1"/>
    <property type="molecule type" value="mRNA"/>
</dbReference>
<dbReference type="EMBL" id="BT000701">
    <property type="protein sequence ID" value="AAN31845.1"/>
    <property type="status" value="ALT_FRAME"/>
    <property type="molecule type" value="mRNA"/>
</dbReference>
<dbReference type="RefSeq" id="NP_001118922.1">
    <molecule id="Q8H159-2"/>
    <property type="nucleotide sequence ID" value="NM_001125450.2"/>
</dbReference>
<dbReference type="RefSeq" id="NP_001328998.1">
    <molecule id="Q8H159-2"/>
    <property type="nucleotide sequence ID" value="NM_001340547.1"/>
</dbReference>
<dbReference type="RefSeq" id="NP_849292.1">
    <molecule id="Q8H159-2"/>
    <property type="nucleotide sequence ID" value="NM_178961.1"/>
</dbReference>
<dbReference type="RefSeq" id="NP_849299.4">
    <molecule id="Q8H159-1"/>
    <property type="nucleotide sequence ID" value="NM_178968.5"/>
</dbReference>
<dbReference type="RefSeq" id="NP_849301.4">
    <molecule id="Q8H159-1"/>
    <property type="nucleotide sequence ID" value="NM_178970.5"/>
</dbReference>
<dbReference type="RefSeq" id="NP_974516.4">
    <molecule id="Q8H159-2"/>
    <property type="nucleotide sequence ID" value="NM_202787.4"/>
</dbReference>
<dbReference type="SMR" id="Q8H159"/>
<dbReference type="BioGRID" id="11191">
    <property type="interactions" value="13"/>
</dbReference>
<dbReference type="BioGRID" id="13437">
    <property type="interactions" value="3"/>
</dbReference>
<dbReference type="FunCoup" id="Q8H159">
    <property type="interactions" value="2629"/>
</dbReference>
<dbReference type="IntAct" id="Q8H159">
    <property type="interactions" value="1"/>
</dbReference>
<dbReference type="STRING" id="3702.Q8H159"/>
<dbReference type="iPTMnet" id="Q8H159"/>
<dbReference type="PaxDb" id="3702-AT4G05320.2"/>
<dbReference type="EnsemblPlants" id="AT4G02890.3">
    <molecule id="Q8H159-2"/>
    <property type="protein sequence ID" value="AT4G02890.3"/>
    <property type="gene ID" value="AT4G02890"/>
</dbReference>
<dbReference type="EnsemblPlants" id="AT4G02890.4">
    <molecule id="Q8H159-2"/>
    <property type="protein sequence ID" value="AT4G02890.4"/>
    <property type="gene ID" value="AT4G02890"/>
</dbReference>
<dbReference type="EnsemblPlants" id="AT4G05320.2">
    <molecule id="Q8H159-1"/>
    <property type="protein sequence ID" value="AT4G05320.2"/>
    <property type="gene ID" value="AT4G05320"/>
</dbReference>
<dbReference type="EnsemblPlants" id="AT4G05320.4">
    <molecule id="Q8H159-1"/>
    <property type="protein sequence ID" value="AT4G05320.4"/>
    <property type="gene ID" value="AT4G05320"/>
</dbReference>
<dbReference type="EnsemblPlants" id="AT4G05320.5">
    <molecule id="Q8H159-2"/>
    <property type="protein sequence ID" value="AT4G05320.5"/>
    <property type="gene ID" value="AT4G05320"/>
</dbReference>
<dbReference type="EnsemblPlants" id="AT4G05320.8">
    <molecule id="Q8H159-2"/>
    <property type="protein sequence ID" value="AT4G05320.8"/>
    <property type="gene ID" value="AT4G05320"/>
</dbReference>
<dbReference type="GeneID" id="825880"/>
<dbReference type="Gramene" id="AT4G02890.3">
    <molecule id="Q8H159-2"/>
    <property type="protein sequence ID" value="AT4G02890.3"/>
    <property type="gene ID" value="AT4G02890"/>
</dbReference>
<dbReference type="Gramene" id="AT4G02890.4">
    <molecule id="Q8H159-2"/>
    <property type="protein sequence ID" value="AT4G02890.4"/>
    <property type="gene ID" value="AT4G02890"/>
</dbReference>
<dbReference type="Gramene" id="AT4G05320.2">
    <molecule id="Q8H159-1"/>
    <property type="protein sequence ID" value="AT4G05320.2"/>
    <property type="gene ID" value="AT4G05320"/>
</dbReference>
<dbReference type="Gramene" id="AT4G05320.4">
    <molecule id="Q8H159-1"/>
    <property type="protein sequence ID" value="AT4G05320.4"/>
    <property type="gene ID" value="AT4G05320"/>
</dbReference>
<dbReference type="Gramene" id="AT4G05320.5">
    <molecule id="Q8H159-2"/>
    <property type="protein sequence ID" value="AT4G05320.5"/>
    <property type="gene ID" value="AT4G05320"/>
</dbReference>
<dbReference type="Gramene" id="AT4G05320.8">
    <molecule id="Q8H159-2"/>
    <property type="protein sequence ID" value="AT4G05320.8"/>
    <property type="gene ID" value="AT4G05320"/>
</dbReference>
<dbReference type="KEGG" id="ath:AT4G02890"/>
<dbReference type="KEGG" id="ath:AT4G05320"/>
<dbReference type="Araport" id="AT4G05320"/>
<dbReference type="TAIR" id="AT4G05320">
    <property type="gene designation" value="UBQ10"/>
</dbReference>
<dbReference type="eggNOG" id="KOG0001">
    <property type="taxonomic scope" value="Eukaryota"/>
</dbReference>
<dbReference type="HOGENOM" id="CLU_010412_7_1_1"/>
<dbReference type="InParanoid" id="Q8H159"/>
<dbReference type="OrthoDB" id="1494560at2759"/>
<dbReference type="PhylomeDB" id="Q8H159"/>
<dbReference type="PRO" id="PR:Q8H159"/>
<dbReference type="Proteomes" id="UP000006548">
    <property type="component" value="Chromosome 4"/>
</dbReference>
<dbReference type="ExpressionAtlas" id="Q8H159">
    <property type="expression patterns" value="baseline and differential"/>
</dbReference>
<dbReference type="GO" id="GO:0005829">
    <property type="term" value="C:cytosol"/>
    <property type="evidence" value="ECO:0007005"/>
    <property type="project" value="TAIR"/>
</dbReference>
<dbReference type="GO" id="GO:0005634">
    <property type="term" value="C:nucleus"/>
    <property type="evidence" value="ECO:0007669"/>
    <property type="project" value="UniProtKB-SubCell"/>
</dbReference>
<dbReference type="GO" id="GO:0003729">
    <property type="term" value="F:mRNA binding"/>
    <property type="evidence" value="ECO:0000314"/>
    <property type="project" value="TAIR"/>
</dbReference>
<dbReference type="GO" id="GO:0009751">
    <property type="term" value="P:response to salicylic acid"/>
    <property type="evidence" value="ECO:0000270"/>
    <property type="project" value="TAIR"/>
</dbReference>
<dbReference type="CDD" id="cd01803">
    <property type="entry name" value="Ubl_ubiquitin"/>
    <property type="match status" value="6"/>
</dbReference>
<dbReference type="FunFam" id="3.10.20.90:FF:000016">
    <property type="entry name" value="Polyubiquitin 3"/>
    <property type="match status" value="6"/>
</dbReference>
<dbReference type="Gene3D" id="3.10.20.90">
    <property type="entry name" value="Phosphatidylinositol 3-kinase Catalytic Subunit, Chain A, domain 1"/>
    <property type="match status" value="6"/>
</dbReference>
<dbReference type="InterPro" id="IPR000626">
    <property type="entry name" value="Ubiquitin-like_dom"/>
</dbReference>
<dbReference type="InterPro" id="IPR029071">
    <property type="entry name" value="Ubiquitin-like_domsf"/>
</dbReference>
<dbReference type="InterPro" id="IPR019954">
    <property type="entry name" value="Ubiquitin_CS"/>
</dbReference>
<dbReference type="InterPro" id="IPR019956">
    <property type="entry name" value="Ubiquitin_dom"/>
</dbReference>
<dbReference type="InterPro" id="IPR050158">
    <property type="entry name" value="Ubiquitin_ubiquitin-like"/>
</dbReference>
<dbReference type="PANTHER" id="PTHR10666">
    <property type="entry name" value="UBIQUITIN"/>
    <property type="match status" value="1"/>
</dbReference>
<dbReference type="Pfam" id="PF00240">
    <property type="entry name" value="ubiquitin"/>
    <property type="match status" value="6"/>
</dbReference>
<dbReference type="PRINTS" id="PR00348">
    <property type="entry name" value="UBIQUITIN"/>
</dbReference>
<dbReference type="SMART" id="SM00213">
    <property type="entry name" value="UBQ"/>
    <property type="match status" value="6"/>
</dbReference>
<dbReference type="SUPFAM" id="SSF54236">
    <property type="entry name" value="Ubiquitin-like"/>
    <property type="match status" value="6"/>
</dbReference>
<dbReference type="PROSITE" id="PS00299">
    <property type="entry name" value="UBIQUITIN_1"/>
    <property type="match status" value="6"/>
</dbReference>
<dbReference type="PROSITE" id="PS50053">
    <property type="entry name" value="UBIQUITIN_2"/>
    <property type="match status" value="6"/>
</dbReference>
<protein>
    <recommendedName>
        <fullName>Polyubiquitin 10</fullName>
    </recommendedName>
    <component>
        <recommendedName>
            <fullName>Ubiquitin</fullName>
        </recommendedName>
    </component>
</protein>
<evidence type="ECO:0000250" key="1"/>
<evidence type="ECO:0000255" key="2">
    <source>
        <dbReference type="PROSITE-ProRule" id="PRU00214"/>
    </source>
</evidence>
<evidence type="ECO:0000305" key="3"/>